<reference key="1">
    <citation type="journal article" date="2008" name="J. Bacteriol.">
        <title>The complete genome sequence of Actinobacillus pleuropneumoniae L20 (serotype 5b).</title>
        <authorList>
            <person name="Foote S.J."/>
            <person name="Bosse J.T."/>
            <person name="Bouevitch A.B."/>
            <person name="Langford P.R."/>
            <person name="Young N.M."/>
            <person name="Nash J.H.E."/>
        </authorList>
    </citation>
    <scope>NUCLEOTIDE SEQUENCE [LARGE SCALE GENOMIC DNA]</scope>
    <source>
        <strain>L20</strain>
    </source>
</reference>
<dbReference type="EC" id="5.4.2.11" evidence="1"/>
<dbReference type="EMBL" id="CP000569">
    <property type="protein sequence ID" value="ABN73928.1"/>
    <property type="molecule type" value="Genomic_DNA"/>
</dbReference>
<dbReference type="RefSeq" id="WP_005597307.1">
    <property type="nucleotide sequence ID" value="NC_009053.1"/>
</dbReference>
<dbReference type="SMR" id="A3N0J2"/>
<dbReference type="STRING" id="416269.APL_0832"/>
<dbReference type="EnsemblBacteria" id="ABN73928">
    <property type="protein sequence ID" value="ABN73928"/>
    <property type="gene ID" value="APL_0832"/>
</dbReference>
<dbReference type="KEGG" id="apl:APL_0832"/>
<dbReference type="eggNOG" id="COG0588">
    <property type="taxonomic scope" value="Bacteria"/>
</dbReference>
<dbReference type="HOGENOM" id="CLU_033323_1_5_6"/>
<dbReference type="UniPathway" id="UPA00109">
    <property type="reaction ID" value="UER00186"/>
</dbReference>
<dbReference type="Proteomes" id="UP000001432">
    <property type="component" value="Chromosome"/>
</dbReference>
<dbReference type="GO" id="GO:0004619">
    <property type="term" value="F:phosphoglycerate mutase activity"/>
    <property type="evidence" value="ECO:0007669"/>
    <property type="project" value="UniProtKB-EC"/>
</dbReference>
<dbReference type="GO" id="GO:0006094">
    <property type="term" value="P:gluconeogenesis"/>
    <property type="evidence" value="ECO:0007669"/>
    <property type="project" value="UniProtKB-UniRule"/>
</dbReference>
<dbReference type="GO" id="GO:0006096">
    <property type="term" value="P:glycolytic process"/>
    <property type="evidence" value="ECO:0007669"/>
    <property type="project" value="UniProtKB-UniRule"/>
</dbReference>
<dbReference type="CDD" id="cd07067">
    <property type="entry name" value="HP_PGM_like"/>
    <property type="match status" value="1"/>
</dbReference>
<dbReference type="FunFam" id="3.40.50.1240:FF:000003">
    <property type="entry name" value="2,3-bisphosphoglycerate-dependent phosphoglycerate mutase"/>
    <property type="match status" value="1"/>
</dbReference>
<dbReference type="Gene3D" id="3.40.50.1240">
    <property type="entry name" value="Phosphoglycerate mutase-like"/>
    <property type="match status" value="1"/>
</dbReference>
<dbReference type="HAMAP" id="MF_01039">
    <property type="entry name" value="PGAM_GpmA"/>
    <property type="match status" value="1"/>
</dbReference>
<dbReference type="InterPro" id="IPR013078">
    <property type="entry name" value="His_Pase_superF_clade-1"/>
</dbReference>
<dbReference type="InterPro" id="IPR029033">
    <property type="entry name" value="His_PPase_superfam"/>
</dbReference>
<dbReference type="InterPro" id="IPR005952">
    <property type="entry name" value="Phosphogly_mut1"/>
</dbReference>
<dbReference type="NCBIfam" id="TIGR01258">
    <property type="entry name" value="pgm_1"/>
    <property type="match status" value="1"/>
</dbReference>
<dbReference type="NCBIfam" id="NF010713">
    <property type="entry name" value="PRK14115.1"/>
    <property type="match status" value="1"/>
</dbReference>
<dbReference type="NCBIfam" id="NF010716">
    <property type="entry name" value="PRK14118.1"/>
    <property type="match status" value="1"/>
</dbReference>
<dbReference type="PANTHER" id="PTHR11931">
    <property type="entry name" value="PHOSPHOGLYCERATE MUTASE"/>
    <property type="match status" value="1"/>
</dbReference>
<dbReference type="Pfam" id="PF00300">
    <property type="entry name" value="His_Phos_1"/>
    <property type="match status" value="2"/>
</dbReference>
<dbReference type="PIRSF" id="PIRSF000709">
    <property type="entry name" value="6PFK_2-Ptase"/>
    <property type="match status" value="1"/>
</dbReference>
<dbReference type="SMART" id="SM00855">
    <property type="entry name" value="PGAM"/>
    <property type="match status" value="1"/>
</dbReference>
<dbReference type="SUPFAM" id="SSF53254">
    <property type="entry name" value="Phosphoglycerate mutase-like"/>
    <property type="match status" value="1"/>
</dbReference>
<proteinExistence type="inferred from homology"/>
<keyword id="KW-0312">Gluconeogenesis</keyword>
<keyword id="KW-0324">Glycolysis</keyword>
<keyword id="KW-0413">Isomerase</keyword>
<keyword id="KW-1185">Reference proteome</keyword>
<accession>A3N0J2</accession>
<protein>
    <recommendedName>
        <fullName evidence="1">2,3-bisphosphoglycerate-dependent phosphoglycerate mutase</fullName>
        <shortName evidence="1">BPG-dependent PGAM</shortName>
        <shortName evidence="1">PGAM</shortName>
        <shortName evidence="1">Phosphoglyceromutase</shortName>
        <shortName evidence="1">dPGM</shortName>
        <ecNumber evidence="1">5.4.2.11</ecNumber>
    </recommendedName>
</protein>
<feature type="chain" id="PRO_1000064025" description="2,3-bisphosphoglycerate-dependent phosphoglycerate mutase">
    <location>
        <begin position="1"/>
        <end position="227"/>
    </location>
</feature>
<feature type="active site" description="Tele-phosphohistidine intermediate" evidence="1">
    <location>
        <position position="8"/>
    </location>
</feature>
<feature type="active site" description="Proton donor/acceptor" evidence="1">
    <location>
        <position position="86"/>
    </location>
</feature>
<feature type="binding site" evidence="1">
    <location>
        <begin position="7"/>
        <end position="14"/>
    </location>
    <ligand>
        <name>substrate</name>
    </ligand>
</feature>
<feature type="binding site" evidence="1">
    <location>
        <begin position="20"/>
        <end position="21"/>
    </location>
    <ligand>
        <name>substrate</name>
    </ligand>
</feature>
<feature type="binding site" evidence="1">
    <location>
        <position position="59"/>
    </location>
    <ligand>
        <name>substrate</name>
    </ligand>
</feature>
<feature type="binding site" evidence="1">
    <location>
        <begin position="86"/>
        <end position="89"/>
    </location>
    <ligand>
        <name>substrate</name>
    </ligand>
</feature>
<feature type="binding site" evidence="1">
    <location>
        <position position="97"/>
    </location>
    <ligand>
        <name>substrate</name>
    </ligand>
</feature>
<feature type="binding site" evidence="1">
    <location>
        <begin position="113"/>
        <end position="114"/>
    </location>
    <ligand>
        <name>substrate</name>
    </ligand>
</feature>
<feature type="binding site" evidence="1">
    <location>
        <begin position="182"/>
        <end position="183"/>
    </location>
    <ligand>
        <name>substrate</name>
    </ligand>
</feature>
<feature type="site" description="Transition state stabilizer" evidence="1">
    <location>
        <position position="181"/>
    </location>
</feature>
<gene>
    <name evidence="1" type="primary">gpmA</name>
    <name type="ordered locus">APL_0832</name>
</gene>
<name>GPMA_ACTP2</name>
<sequence length="227" mass="25905">MELVFIRHGFSEWNAKNLFTGWRDVNLTERGIEEAKSAGQKLKAAGYEFDIAFTSVLTRAIKTCNIVLEESNQLWIPQVKNWRLNERHYGALQGLDKKATAEQYGDEQVHIWRRSYDISPPDLDAADPNSAHNDRRYAHLPKDVIPNAENLKITLERVLPFWEDQIAPALLSGKRVLVTAHGNSLRALAKHIIGISDAEIMDFEIPTGQPLVLKLDDKLNFVEKFYL</sequence>
<evidence type="ECO:0000255" key="1">
    <source>
        <dbReference type="HAMAP-Rule" id="MF_01039"/>
    </source>
</evidence>
<organism>
    <name type="scientific">Actinobacillus pleuropneumoniae serotype 5b (strain L20)</name>
    <dbReference type="NCBI Taxonomy" id="416269"/>
    <lineage>
        <taxon>Bacteria</taxon>
        <taxon>Pseudomonadati</taxon>
        <taxon>Pseudomonadota</taxon>
        <taxon>Gammaproteobacteria</taxon>
        <taxon>Pasteurellales</taxon>
        <taxon>Pasteurellaceae</taxon>
        <taxon>Actinobacillus</taxon>
    </lineage>
</organism>
<comment type="function">
    <text evidence="1">Catalyzes the interconversion of 2-phosphoglycerate and 3-phosphoglycerate.</text>
</comment>
<comment type="catalytic activity">
    <reaction evidence="1">
        <text>(2R)-2-phosphoglycerate = (2R)-3-phosphoglycerate</text>
        <dbReference type="Rhea" id="RHEA:15901"/>
        <dbReference type="ChEBI" id="CHEBI:58272"/>
        <dbReference type="ChEBI" id="CHEBI:58289"/>
        <dbReference type="EC" id="5.4.2.11"/>
    </reaction>
</comment>
<comment type="pathway">
    <text evidence="1">Carbohydrate degradation; glycolysis; pyruvate from D-glyceraldehyde 3-phosphate: step 3/5.</text>
</comment>
<comment type="subunit">
    <text evidence="1">Homodimer.</text>
</comment>
<comment type="similarity">
    <text evidence="1">Belongs to the phosphoglycerate mutase family. BPG-dependent PGAM subfamily.</text>
</comment>